<evidence type="ECO:0000255" key="1">
    <source>
        <dbReference type="HAMAP-Rule" id="MF_01343"/>
    </source>
</evidence>
<evidence type="ECO:0000305" key="2"/>
<protein>
    <recommendedName>
        <fullName evidence="1">Small ribosomal subunit protein uS15</fullName>
    </recommendedName>
    <alternativeName>
        <fullName evidence="2">30S ribosomal protein S15</fullName>
    </alternativeName>
</protein>
<organism>
    <name type="scientific">Brucella suis biovar 1 (strain 1330)</name>
    <dbReference type="NCBI Taxonomy" id="204722"/>
    <lineage>
        <taxon>Bacteria</taxon>
        <taxon>Pseudomonadati</taxon>
        <taxon>Pseudomonadota</taxon>
        <taxon>Alphaproteobacteria</taxon>
        <taxon>Hyphomicrobiales</taxon>
        <taxon>Brucellaceae</taxon>
        <taxon>Brucella/Ochrobactrum group</taxon>
        <taxon>Brucella</taxon>
    </lineage>
</organism>
<comment type="function">
    <text evidence="1">One of the primary rRNA binding proteins, it binds directly to 16S rRNA where it helps nucleate assembly of the platform of the 30S subunit by binding and bridging several RNA helices of the 16S rRNA.</text>
</comment>
<comment type="function">
    <text evidence="1">Forms an intersubunit bridge (bridge B4) with the 23S rRNA of the 50S subunit in the ribosome.</text>
</comment>
<comment type="subunit">
    <text evidence="1">Part of the 30S ribosomal subunit. Forms a bridge to the 50S subunit in the 70S ribosome, contacting the 23S rRNA.</text>
</comment>
<comment type="similarity">
    <text evidence="1">Belongs to the universal ribosomal protein uS15 family.</text>
</comment>
<dbReference type="EMBL" id="AE014291">
    <property type="protein sequence ID" value="AAN31057.1"/>
    <property type="molecule type" value="Genomic_DNA"/>
</dbReference>
<dbReference type="EMBL" id="CP002997">
    <property type="protein sequence ID" value="AEM19475.1"/>
    <property type="molecule type" value="Genomic_DNA"/>
</dbReference>
<dbReference type="RefSeq" id="WP_002965230.1">
    <property type="nucleotide sequence ID" value="NZ_KN046804.1"/>
</dbReference>
<dbReference type="SMR" id="Q8FXT0"/>
<dbReference type="GeneID" id="97534579"/>
<dbReference type="KEGG" id="bms:BR2168"/>
<dbReference type="KEGG" id="bsi:BS1330_I2162"/>
<dbReference type="PATRIC" id="fig|204722.21.peg.642"/>
<dbReference type="HOGENOM" id="CLU_148518_0_0_5"/>
<dbReference type="Proteomes" id="UP000007104">
    <property type="component" value="Chromosome I"/>
</dbReference>
<dbReference type="GO" id="GO:0022627">
    <property type="term" value="C:cytosolic small ribosomal subunit"/>
    <property type="evidence" value="ECO:0007669"/>
    <property type="project" value="TreeGrafter"/>
</dbReference>
<dbReference type="GO" id="GO:0019843">
    <property type="term" value="F:rRNA binding"/>
    <property type="evidence" value="ECO:0007669"/>
    <property type="project" value="UniProtKB-UniRule"/>
</dbReference>
<dbReference type="GO" id="GO:0003735">
    <property type="term" value="F:structural constituent of ribosome"/>
    <property type="evidence" value="ECO:0007669"/>
    <property type="project" value="InterPro"/>
</dbReference>
<dbReference type="GO" id="GO:0006412">
    <property type="term" value="P:translation"/>
    <property type="evidence" value="ECO:0007669"/>
    <property type="project" value="UniProtKB-UniRule"/>
</dbReference>
<dbReference type="CDD" id="cd00353">
    <property type="entry name" value="Ribosomal_S15p_S13e"/>
    <property type="match status" value="1"/>
</dbReference>
<dbReference type="FunFam" id="1.10.287.10:FF:000002">
    <property type="entry name" value="30S ribosomal protein S15"/>
    <property type="match status" value="1"/>
</dbReference>
<dbReference type="Gene3D" id="6.10.250.3130">
    <property type="match status" value="1"/>
</dbReference>
<dbReference type="Gene3D" id="1.10.287.10">
    <property type="entry name" value="S15/NS1, RNA-binding"/>
    <property type="match status" value="1"/>
</dbReference>
<dbReference type="HAMAP" id="MF_01343_B">
    <property type="entry name" value="Ribosomal_uS15_B"/>
    <property type="match status" value="1"/>
</dbReference>
<dbReference type="InterPro" id="IPR000589">
    <property type="entry name" value="Ribosomal_uS15"/>
</dbReference>
<dbReference type="InterPro" id="IPR005290">
    <property type="entry name" value="Ribosomal_uS15_bac-type"/>
</dbReference>
<dbReference type="InterPro" id="IPR009068">
    <property type="entry name" value="uS15_NS1_RNA-bd_sf"/>
</dbReference>
<dbReference type="NCBIfam" id="TIGR00952">
    <property type="entry name" value="S15_bact"/>
    <property type="match status" value="1"/>
</dbReference>
<dbReference type="PANTHER" id="PTHR23321">
    <property type="entry name" value="RIBOSOMAL PROTEIN S15, BACTERIAL AND ORGANELLAR"/>
    <property type="match status" value="1"/>
</dbReference>
<dbReference type="PANTHER" id="PTHR23321:SF26">
    <property type="entry name" value="SMALL RIBOSOMAL SUBUNIT PROTEIN US15M"/>
    <property type="match status" value="1"/>
</dbReference>
<dbReference type="Pfam" id="PF00312">
    <property type="entry name" value="Ribosomal_S15"/>
    <property type="match status" value="1"/>
</dbReference>
<dbReference type="SMART" id="SM01387">
    <property type="entry name" value="Ribosomal_S15"/>
    <property type="match status" value="1"/>
</dbReference>
<dbReference type="SUPFAM" id="SSF47060">
    <property type="entry name" value="S15/NS1 RNA-binding domain"/>
    <property type="match status" value="1"/>
</dbReference>
<dbReference type="PROSITE" id="PS00362">
    <property type="entry name" value="RIBOSOMAL_S15"/>
    <property type="match status" value="1"/>
</dbReference>
<sequence>MSITAERKQALIKEYATKEGDTGSPEVQVAVLSERIANLTEHFKGHKNDNHSRRGLLKLVSQRRRLLDYVKGVDHARYQALITRLGLRR</sequence>
<gene>
    <name evidence="1" type="primary">rpsO</name>
    <name type="ordered locus">BR2168</name>
    <name type="ordered locus">BS1330_I2162</name>
</gene>
<keyword id="KW-0687">Ribonucleoprotein</keyword>
<keyword id="KW-0689">Ribosomal protein</keyword>
<keyword id="KW-0694">RNA-binding</keyword>
<keyword id="KW-0699">rRNA-binding</keyword>
<reference key="1">
    <citation type="journal article" date="2002" name="Proc. Natl. Acad. Sci. U.S.A.">
        <title>The Brucella suis genome reveals fundamental similarities between animal and plant pathogens and symbionts.</title>
        <authorList>
            <person name="Paulsen I.T."/>
            <person name="Seshadri R."/>
            <person name="Nelson K.E."/>
            <person name="Eisen J.A."/>
            <person name="Heidelberg J.F."/>
            <person name="Read T.D."/>
            <person name="Dodson R.J."/>
            <person name="Umayam L.A."/>
            <person name="Brinkac L.M."/>
            <person name="Beanan M.J."/>
            <person name="Daugherty S.C."/>
            <person name="DeBoy R.T."/>
            <person name="Durkin A.S."/>
            <person name="Kolonay J.F."/>
            <person name="Madupu R."/>
            <person name="Nelson W.C."/>
            <person name="Ayodeji B."/>
            <person name="Kraul M."/>
            <person name="Shetty J."/>
            <person name="Malek J.A."/>
            <person name="Van Aken S.E."/>
            <person name="Riedmuller S."/>
            <person name="Tettelin H."/>
            <person name="Gill S.R."/>
            <person name="White O."/>
            <person name="Salzberg S.L."/>
            <person name="Hoover D.L."/>
            <person name="Lindler L.E."/>
            <person name="Halling S.M."/>
            <person name="Boyle S.M."/>
            <person name="Fraser C.M."/>
        </authorList>
    </citation>
    <scope>NUCLEOTIDE SEQUENCE [LARGE SCALE GENOMIC DNA]</scope>
    <source>
        <strain>1330</strain>
    </source>
</reference>
<reference key="2">
    <citation type="journal article" date="2011" name="J. Bacteriol.">
        <title>Revised genome sequence of Brucella suis 1330.</title>
        <authorList>
            <person name="Tae H."/>
            <person name="Shallom S."/>
            <person name="Settlage R."/>
            <person name="Preston D."/>
            <person name="Adams L.G."/>
            <person name="Garner H.R."/>
        </authorList>
    </citation>
    <scope>NUCLEOTIDE SEQUENCE [LARGE SCALE GENOMIC DNA]</scope>
    <source>
        <strain>1330</strain>
    </source>
</reference>
<accession>Q8FXT0</accession>
<accession>G0K9J4</accession>
<feature type="chain" id="PRO_0000115401" description="Small ribosomal subunit protein uS15">
    <location>
        <begin position="1"/>
        <end position="89"/>
    </location>
</feature>
<proteinExistence type="inferred from homology"/>
<name>RS15_BRUSU</name>